<organism>
    <name type="scientific">Escherichia coli (strain SE11)</name>
    <dbReference type="NCBI Taxonomy" id="409438"/>
    <lineage>
        <taxon>Bacteria</taxon>
        <taxon>Pseudomonadati</taxon>
        <taxon>Pseudomonadota</taxon>
        <taxon>Gammaproteobacteria</taxon>
        <taxon>Enterobacterales</taxon>
        <taxon>Enterobacteriaceae</taxon>
        <taxon>Escherichia</taxon>
    </lineage>
</organism>
<gene>
    <name evidence="1" type="primary">pepE</name>
    <name type="ordered locus">ECSE_4306</name>
</gene>
<comment type="function">
    <text evidence="1">Hydrolyzes dipeptides containing N-terminal aspartate residues. May play a role in allowing the cell to use peptide aspartate to spare carbon otherwise required for the synthesis of the aspartate family of amino acids.</text>
</comment>
<comment type="catalytic activity">
    <reaction evidence="1">
        <text>Dipeptidase E catalyzes the hydrolysis of dipeptides Asp-|-Xaa. It does not act on peptides with N-terminal Glu, Asn or Gln, nor does it cleave isoaspartyl peptides.</text>
        <dbReference type="EC" id="3.4.13.21"/>
    </reaction>
</comment>
<comment type="subcellular location">
    <subcellularLocation>
        <location evidence="1">Cytoplasm</location>
    </subcellularLocation>
</comment>
<comment type="similarity">
    <text evidence="1">Belongs to the peptidase S51 family.</text>
</comment>
<keyword id="KW-0963">Cytoplasm</keyword>
<keyword id="KW-0224">Dipeptidase</keyword>
<keyword id="KW-0378">Hydrolase</keyword>
<keyword id="KW-0645">Protease</keyword>
<keyword id="KW-0720">Serine protease</keyword>
<feature type="chain" id="PRO_1000127246" description="Peptidase E">
    <location>
        <begin position="1"/>
        <end position="229"/>
    </location>
</feature>
<feature type="active site" description="Charge relay system" evidence="1">
    <location>
        <position position="120"/>
    </location>
</feature>
<feature type="active site" description="Charge relay system" evidence="1">
    <location>
        <position position="135"/>
    </location>
</feature>
<feature type="active site" description="Charge relay system" evidence="1">
    <location>
        <position position="157"/>
    </location>
</feature>
<sequence length="229" mass="24570">MELLLLSNSTLPGKAWLEHALPLIAEQLQGRRSAVFIPFAGVTQTWDDYTAKTAAVLAPLGVSVTGIHSVVDPVAAIENAEIVIVGGGNTFQLLKQCRERGLLAPITDVVKRGALYIGWSAGANLACPTIRTTNDMPIVDPQGFDALNLFPLQINPHFTNALPEGHKGETREQRIRELLVVAPELTIIGLPEGNWITVSKGHATLGGPNTTYVFKAGEEAVPLEAGHRF</sequence>
<proteinExistence type="inferred from homology"/>
<accession>B6I5M9</accession>
<name>PEPE_ECOSE</name>
<reference key="1">
    <citation type="journal article" date="2008" name="DNA Res.">
        <title>Complete genome sequence and comparative analysis of the wild-type commensal Escherichia coli strain SE11 isolated from a healthy adult.</title>
        <authorList>
            <person name="Oshima K."/>
            <person name="Toh H."/>
            <person name="Ogura Y."/>
            <person name="Sasamoto H."/>
            <person name="Morita H."/>
            <person name="Park S.-H."/>
            <person name="Ooka T."/>
            <person name="Iyoda S."/>
            <person name="Taylor T.D."/>
            <person name="Hayashi T."/>
            <person name="Itoh K."/>
            <person name="Hattori M."/>
        </authorList>
    </citation>
    <scope>NUCLEOTIDE SEQUENCE [LARGE SCALE GENOMIC DNA]</scope>
    <source>
        <strain>SE11</strain>
    </source>
</reference>
<dbReference type="EC" id="3.4.13.21" evidence="1"/>
<dbReference type="EMBL" id="AP009240">
    <property type="protein sequence ID" value="BAG79830.1"/>
    <property type="molecule type" value="Genomic_DNA"/>
</dbReference>
<dbReference type="RefSeq" id="WP_000421763.1">
    <property type="nucleotide sequence ID" value="NC_011415.1"/>
</dbReference>
<dbReference type="SMR" id="B6I5M9"/>
<dbReference type="MEROPS" id="S51.001"/>
<dbReference type="GeneID" id="93777874"/>
<dbReference type="KEGG" id="ecy:ECSE_4306"/>
<dbReference type="HOGENOM" id="CLU_071689_0_0_6"/>
<dbReference type="Proteomes" id="UP000008199">
    <property type="component" value="Chromosome"/>
</dbReference>
<dbReference type="GO" id="GO:0005737">
    <property type="term" value="C:cytoplasm"/>
    <property type="evidence" value="ECO:0007669"/>
    <property type="project" value="UniProtKB-SubCell"/>
</dbReference>
<dbReference type="GO" id="GO:0016805">
    <property type="term" value="F:dipeptidase activity"/>
    <property type="evidence" value="ECO:0007669"/>
    <property type="project" value="UniProtKB-UniRule"/>
</dbReference>
<dbReference type="GO" id="GO:0008236">
    <property type="term" value="F:serine-type peptidase activity"/>
    <property type="evidence" value="ECO:0007669"/>
    <property type="project" value="UniProtKB-KW"/>
</dbReference>
<dbReference type="GO" id="GO:0006508">
    <property type="term" value="P:proteolysis"/>
    <property type="evidence" value="ECO:0007669"/>
    <property type="project" value="UniProtKB-UniRule"/>
</dbReference>
<dbReference type="CDD" id="cd03146">
    <property type="entry name" value="GAT1_Peptidase_E"/>
    <property type="match status" value="1"/>
</dbReference>
<dbReference type="FunFam" id="3.40.50.880:FF:000007">
    <property type="entry name" value="Peptidase E"/>
    <property type="match status" value="1"/>
</dbReference>
<dbReference type="Gene3D" id="3.40.50.880">
    <property type="match status" value="1"/>
</dbReference>
<dbReference type="HAMAP" id="MF_00510">
    <property type="entry name" value="Peptidase_E"/>
    <property type="match status" value="1"/>
</dbReference>
<dbReference type="InterPro" id="IPR029062">
    <property type="entry name" value="Class_I_gatase-like"/>
</dbReference>
<dbReference type="InterPro" id="IPR005320">
    <property type="entry name" value="Peptidase_S51"/>
</dbReference>
<dbReference type="InterPro" id="IPR023172">
    <property type="entry name" value="Peptidase_S51_dipeptidase-E"/>
</dbReference>
<dbReference type="NCBIfam" id="NF003642">
    <property type="entry name" value="PRK05282.1"/>
    <property type="match status" value="1"/>
</dbReference>
<dbReference type="PANTHER" id="PTHR20842:SF0">
    <property type="entry name" value="ALPHA-ASPARTYL DIPEPTIDASE"/>
    <property type="match status" value="1"/>
</dbReference>
<dbReference type="PANTHER" id="PTHR20842">
    <property type="entry name" value="PROTEASE S51 ALPHA-ASPARTYL DIPEPTIDASE"/>
    <property type="match status" value="1"/>
</dbReference>
<dbReference type="Pfam" id="PF03575">
    <property type="entry name" value="Peptidase_S51"/>
    <property type="match status" value="1"/>
</dbReference>
<dbReference type="SUPFAM" id="SSF52317">
    <property type="entry name" value="Class I glutamine amidotransferase-like"/>
    <property type="match status" value="1"/>
</dbReference>
<evidence type="ECO:0000255" key="1">
    <source>
        <dbReference type="HAMAP-Rule" id="MF_00510"/>
    </source>
</evidence>
<protein>
    <recommendedName>
        <fullName evidence="1">Peptidase E</fullName>
        <ecNumber evidence="1">3.4.13.21</ecNumber>
    </recommendedName>
    <alternativeName>
        <fullName evidence="1">Alpha-aspartyl dipeptidase</fullName>
    </alternativeName>
    <alternativeName>
        <fullName evidence="1">Asp-specific dipeptidase</fullName>
    </alternativeName>
    <alternativeName>
        <fullName evidence="1">Dipeptidase E</fullName>
    </alternativeName>
</protein>